<keyword id="KW-0227">DNA damage</keyword>
<keyword id="KW-0233">DNA recombination</keyword>
<keyword id="KW-0234">DNA repair</keyword>
<keyword id="KW-0235">DNA replication</keyword>
<keyword id="KW-0238">DNA-binding</keyword>
<keyword id="KW-1185">Reference proteome</keyword>
<gene>
    <name type="primary">ssb</name>
    <name type="ordered locus">R01558</name>
    <name type="ORF">SMc01233</name>
</gene>
<comment type="function">
    <text evidence="1">Plays an important role in DNA replication, recombination and repair. Binds to ssDNA and to an array of partner proteins to recruit them to their sites of action during DNA metabolism.</text>
</comment>
<comment type="subunit">
    <text evidence="1">Homotetramer.</text>
</comment>
<organism>
    <name type="scientific">Rhizobium meliloti (strain 1021)</name>
    <name type="common">Ensifer meliloti</name>
    <name type="synonym">Sinorhizobium meliloti</name>
    <dbReference type="NCBI Taxonomy" id="266834"/>
    <lineage>
        <taxon>Bacteria</taxon>
        <taxon>Pseudomonadati</taxon>
        <taxon>Pseudomonadota</taxon>
        <taxon>Alphaproteobacteria</taxon>
        <taxon>Hyphomicrobiales</taxon>
        <taxon>Rhizobiaceae</taxon>
        <taxon>Sinorhizobium/Ensifer group</taxon>
        <taxon>Sinorhizobium</taxon>
    </lineage>
</organism>
<reference key="1">
    <citation type="journal article" date="2001" name="Proc. Natl. Acad. Sci. U.S.A.">
        <title>Analysis of the chromosome sequence of the legume symbiont Sinorhizobium meliloti strain 1021.</title>
        <authorList>
            <person name="Capela D."/>
            <person name="Barloy-Hubler F."/>
            <person name="Gouzy J."/>
            <person name="Bothe G."/>
            <person name="Ampe F."/>
            <person name="Batut J."/>
            <person name="Boistard P."/>
            <person name="Becker A."/>
            <person name="Boutry M."/>
            <person name="Cadieu E."/>
            <person name="Dreano S."/>
            <person name="Gloux S."/>
            <person name="Godrie T."/>
            <person name="Goffeau A."/>
            <person name="Kahn D."/>
            <person name="Kiss E."/>
            <person name="Lelaure V."/>
            <person name="Masuy D."/>
            <person name="Pohl T."/>
            <person name="Portetelle D."/>
            <person name="Puehler A."/>
            <person name="Purnelle B."/>
            <person name="Ramsperger U."/>
            <person name="Renard C."/>
            <person name="Thebault P."/>
            <person name="Vandenbol M."/>
            <person name="Weidner S."/>
            <person name="Galibert F."/>
        </authorList>
    </citation>
    <scope>NUCLEOTIDE SEQUENCE [LARGE SCALE GENOMIC DNA]</scope>
    <source>
        <strain>1021</strain>
    </source>
</reference>
<reference key="2">
    <citation type="journal article" date="2001" name="Science">
        <title>The composite genome of the legume symbiont Sinorhizobium meliloti.</title>
        <authorList>
            <person name="Galibert F."/>
            <person name="Finan T.M."/>
            <person name="Long S.R."/>
            <person name="Puehler A."/>
            <person name="Abola P."/>
            <person name="Ampe F."/>
            <person name="Barloy-Hubler F."/>
            <person name="Barnett M.J."/>
            <person name="Becker A."/>
            <person name="Boistard P."/>
            <person name="Bothe G."/>
            <person name="Boutry M."/>
            <person name="Bowser L."/>
            <person name="Buhrmester J."/>
            <person name="Cadieu E."/>
            <person name="Capela D."/>
            <person name="Chain P."/>
            <person name="Cowie A."/>
            <person name="Davis R.W."/>
            <person name="Dreano S."/>
            <person name="Federspiel N.A."/>
            <person name="Fisher R.F."/>
            <person name="Gloux S."/>
            <person name="Godrie T."/>
            <person name="Goffeau A."/>
            <person name="Golding B."/>
            <person name="Gouzy J."/>
            <person name="Gurjal M."/>
            <person name="Hernandez-Lucas I."/>
            <person name="Hong A."/>
            <person name="Huizar L."/>
            <person name="Hyman R.W."/>
            <person name="Jones T."/>
            <person name="Kahn D."/>
            <person name="Kahn M.L."/>
            <person name="Kalman S."/>
            <person name="Keating D.H."/>
            <person name="Kiss E."/>
            <person name="Komp C."/>
            <person name="Lelaure V."/>
            <person name="Masuy D."/>
            <person name="Palm C."/>
            <person name="Peck M.C."/>
            <person name="Pohl T.M."/>
            <person name="Portetelle D."/>
            <person name="Purnelle B."/>
            <person name="Ramsperger U."/>
            <person name="Surzycki R."/>
            <person name="Thebault P."/>
            <person name="Vandenbol M."/>
            <person name="Vorhoelter F.J."/>
            <person name="Weidner S."/>
            <person name="Wells D.H."/>
            <person name="Wong K."/>
            <person name="Yeh K.-C."/>
            <person name="Batut J."/>
        </authorList>
    </citation>
    <scope>NUCLEOTIDE SEQUENCE [LARGE SCALE GENOMIC DNA]</scope>
    <source>
        <strain>1021</strain>
    </source>
</reference>
<reference key="3">
    <citation type="journal article" date="1999" name="Mol. Gen. Genet.">
        <title>Regulation of divergent transcription from the uvrA-ssb promoters in Sinorhizobium meliloti.</title>
        <authorList>
            <person name="Tapias A."/>
            <person name="Barbe J."/>
        </authorList>
    </citation>
    <scope>NUCLEOTIDE SEQUENCE [GENOMIC DNA] OF 1-91</scope>
    <source>
        <strain>2021</strain>
    </source>
</reference>
<name>SSB_RHIME</name>
<evidence type="ECO:0000255" key="1">
    <source>
        <dbReference type="HAMAP-Rule" id="MF_00984"/>
    </source>
</evidence>
<evidence type="ECO:0000256" key="2">
    <source>
        <dbReference type="SAM" id="MobiDB-lite"/>
    </source>
</evidence>
<protein>
    <recommendedName>
        <fullName evidence="1">Single-stranded DNA-binding protein</fullName>
        <shortName evidence="1">SSB</shortName>
    </recommendedName>
</protein>
<accession>P56898</accession>
<sequence>MAGSVNKVILIGNVGADPEIRRTQDGRPIANLRIATSETWRDRNSGERREKTEWHTVVVFNEGLCKVVEQYVKKGAKLYIEGQLQTRKWQDQTGNDRYSTEVVLQGFNSTLTMLDGRGGEGGGAGRGGSDYGGGGYEEYDQSRPSSGGARSGGQSNQPNQGGNFSRDLDDDIPF</sequence>
<feature type="chain" id="PRO_0000096085" description="Single-stranded DNA-binding protein">
    <location>
        <begin position="1"/>
        <end position="174"/>
    </location>
</feature>
<feature type="domain" description="SSB" evidence="1">
    <location>
        <begin position="5"/>
        <end position="111"/>
    </location>
</feature>
<feature type="region of interest" description="Disordered" evidence="2">
    <location>
        <begin position="114"/>
        <end position="174"/>
    </location>
</feature>
<feature type="short sequence motif" description="Important for interaction with partner proteins" evidence="1">
    <location>
        <begin position="169"/>
        <end position="174"/>
    </location>
</feature>
<feature type="compositionally biased region" description="Gly residues" evidence="2">
    <location>
        <begin position="119"/>
        <end position="136"/>
    </location>
</feature>
<feature type="compositionally biased region" description="Low complexity" evidence="2">
    <location>
        <begin position="142"/>
        <end position="165"/>
    </location>
</feature>
<dbReference type="EMBL" id="AL591688">
    <property type="protein sequence ID" value="CAC46137.1"/>
    <property type="molecule type" value="Genomic_DNA"/>
</dbReference>
<dbReference type="EMBL" id="AF125162">
    <property type="protein sequence ID" value="AAF03209.1"/>
    <property type="molecule type" value="Genomic_DNA"/>
</dbReference>
<dbReference type="RefSeq" id="NP_385664.1">
    <property type="nucleotide sequence ID" value="NC_003047.1"/>
</dbReference>
<dbReference type="RefSeq" id="WP_003529546.1">
    <property type="nucleotide sequence ID" value="NC_003047.1"/>
</dbReference>
<dbReference type="SMR" id="P56898"/>
<dbReference type="EnsemblBacteria" id="CAC46137">
    <property type="protein sequence ID" value="CAC46137"/>
    <property type="gene ID" value="SMc01233"/>
</dbReference>
<dbReference type="KEGG" id="sme:SMc01233"/>
<dbReference type="PATRIC" id="fig|266834.11.peg.2983"/>
<dbReference type="eggNOG" id="COG0629">
    <property type="taxonomic scope" value="Bacteria"/>
</dbReference>
<dbReference type="HOGENOM" id="CLU_078758_0_1_5"/>
<dbReference type="OrthoDB" id="9809878at2"/>
<dbReference type="Proteomes" id="UP000001976">
    <property type="component" value="Chromosome"/>
</dbReference>
<dbReference type="GO" id="GO:0009295">
    <property type="term" value="C:nucleoid"/>
    <property type="evidence" value="ECO:0007669"/>
    <property type="project" value="TreeGrafter"/>
</dbReference>
<dbReference type="GO" id="GO:0003697">
    <property type="term" value="F:single-stranded DNA binding"/>
    <property type="evidence" value="ECO:0007669"/>
    <property type="project" value="UniProtKB-UniRule"/>
</dbReference>
<dbReference type="GO" id="GO:0006310">
    <property type="term" value="P:DNA recombination"/>
    <property type="evidence" value="ECO:0007669"/>
    <property type="project" value="UniProtKB-UniRule"/>
</dbReference>
<dbReference type="GO" id="GO:0006281">
    <property type="term" value="P:DNA repair"/>
    <property type="evidence" value="ECO:0007669"/>
    <property type="project" value="UniProtKB-UniRule"/>
</dbReference>
<dbReference type="GO" id="GO:0006260">
    <property type="term" value="P:DNA replication"/>
    <property type="evidence" value="ECO:0007669"/>
    <property type="project" value="UniProtKB-UniRule"/>
</dbReference>
<dbReference type="CDD" id="cd04496">
    <property type="entry name" value="SSB_OBF"/>
    <property type="match status" value="1"/>
</dbReference>
<dbReference type="Gene3D" id="2.40.50.140">
    <property type="entry name" value="Nucleic acid-binding proteins"/>
    <property type="match status" value="1"/>
</dbReference>
<dbReference type="HAMAP" id="MF_00984">
    <property type="entry name" value="SSB"/>
    <property type="match status" value="1"/>
</dbReference>
<dbReference type="InterPro" id="IPR012340">
    <property type="entry name" value="NA-bd_OB-fold"/>
</dbReference>
<dbReference type="InterPro" id="IPR000424">
    <property type="entry name" value="Primosome_PriB/ssb"/>
</dbReference>
<dbReference type="InterPro" id="IPR011344">
    <property type="entry name" value="ssDNA-bd"/>
</dbReference>
<dbReference type="NCBIfam" id="NF004972">
    <property type="entry name" value="PRK06341.1"/>
    <property type="match status" value="1"/>
</dbReference>
<dbReference type="NCBIfam" id="TIGR00621">
    <property type="entry name" value="ssb"/>
    <property type="match status" value="1"/>
</dbReference>
<dbReference type="PANTHER" id="PTHR10302">
    <property type="entry name" value="SINGLE-STRANDED DNA-BINDING PROTEIN"/>
    <property type="match status" value="1"/>
</dbReference>
<dbReference type="PANTHER" id="PTHR10302:SF27">
    <property type="entry name" value="SINGLE-STRANDED DNA-BINDING PROTEIN"/>
    <property type="match status" value="1"/>
</dbReference>
<dbReference type="Pfam" id="PF00436">
    <property type="entry name" value="SSB"/>
    <property type="match status" value="1"/>
</dbReference>
<dbReference type="PIRSF" id="PIRSF002070">
    <property type="entry name" value="SSB"/>
    <property type="match status" value="1"/>
</dbReference>
<dbReference type="SUPFAM" id="SSF50249">
    <property type="entry name" value="Nucleic acid-binding proteins"/>
    <property type="match status" value="1"/>
</dbReference>
<dbReference type="PROSITE" id="PS50935">
    <property type="entry name" value="SSB"/>
    <property type="match status" value="1"/>
</dbReference>
<proteinExistence type="inferred from homology"/>